<proteinExistence type="inferred from homology"/>
<name>RL34_CAMHC</name>
<gene>
    <name evidence="1" type="primary">rpmH</name>
    <name type="ordered locus">CHAB381_0649</name>
</gene>
<keyword id="KW-1185">Reference proteome</keyword>
<keyword id="KW-0687">Ribonucleoprotein</keyword>
<keyword id="KW-0689">Ribosomal protein</keyword>
<protein>
    <recommendedName>
        <fullName evidence="1">Large ribosomal subunit protein bL34</fullName>
    </recommendedName>
    <alternativeName>
        <fullName evidence="3">50S ribosomal protein L34</fullName>
    </alternativeName>
</protein>
<organism>
    <name type="scientific">Campylobacter hominis (strain ATCC BAA-381 / DSM 21671 / CCUG 45161 / LMG 19568 / NCTC 13146 / CH001A)</name>
    <dbReference type="NCBI Taxonomy" id="360107"/>
    <lineage>
        <taxon>Bacteria</taxon>
        <taxon>Pseudomonadati</taxon>
        <taxon>Campylobacterota</taxon>
        <taxon>Epsilonproteobacteria</taxon>
        <taxon>Campylobacterales</taxon>
        <taxon>Campylobacteraceae</taxon>
        <taxon>Campylobacter</taxon>
    </lineage>
</organism>
<comment type="similarity">
    <text evidence="1">Belongs to the bacterial ribosomal protein bL34 family.</text>
</comment>
<reference key="1">
    <citation type="submission" date="2007-07" db="EMBL/GenBank/DDBJ databases">
        <title>Complete genome sequence of Campylobacter hominis ATCC BAA-381, a commensal isolated from the human gastrointestinal tract.</title>
        <authorList>
            <person name="Fouts D.E."/>
            <person name="Mongodin E.F."/>
            <person name="Puiu D."/>
            <person name="Sebastian Y."/>
            <person name="Miller W.G."/>
            <person name="Mandrell R.E."/>
            <person name="Nelson K.E."/>
        </authorList>
    </citation>
    <scope>NUCLEOTIDE SEQUENCE [LARGE SCALE GENOMIC DNA]</scope>
    <source>
        <strain>ATCC BAA-381 / DSM 21671 / CCUG 45161 / LMG 19568 / NCTC 13146 / CH001A</strain>
    </source>
</reference>
<evidence type="ECO:0000255" key="1">
    <source>
        <dbReference type="HAMAP-Rule" id="MF_00391"/>
    </source>
</evidence>
<evidence type="ECO:0000256" key="2">
    <source>
        <dbReference type="SAM" id="MobiDB-lite"/>
    </source>
</evidence>
<evidence type="ECO:0000305" key="3"/>
<accession>A7I140</accession>
<feature type="chain" id="PRO_1000013308" description="Large ribosomal subunit protein bL34">
    <location>
        <begin position="1"/>
        <end position="44"/>
    </location>
</feature>
<feature type="region of interest" description="Disordered" evidence="2">
    <location>
        <begin position="1"/>
        <end position="44"/>
    </location>
</feature>
<feature type="compositionally biased region" description="Basic residues" evidence="2">
    <location>
        <begin position="1"/>
        <end position="16"/>
    </location>
</feature>
<feature type="compositionally biased region" description="Basic residues" evidence="2">
    <location>
        <begin position="24"/>
        <end position="44"/>
    </location>
</feature>
<sequence>MKRTYQPHTTPKKRTHGFRERMKTKNGRRVVNARRAKGRKRLAA</sequence>
<dbReference type="EMBL" id="CP000776">
    <property type="protein sequence ID" value="ABS52498.1"/>
    <property type="molecule type" value="Genomic_DNA"/>
</dbReference>
<dbReference type="RefSeq" id="WP_012108518.1">
    <property type="nucleotide sequence ID" value="NC_009714.1"/>
</dbReference>
<dbReference type="SMR" id="A7I140"/>
<dbReference type="STRING" id="360107.CHAB381_0649"/>
<dbReference type="KEGG" id="cha:CHAB381_0649"/>
<dbReference type="eggNOG" id="COG0230">
    <property type="taxonomic scope" value="Bacteria"/>
</dbReference>
<dbReference type="HOGENOM" id="CLU_129938_2_0_7"/>
<dbReference type="OrthoDB" id="9804164at2"/>
<dbReference type="Proteomes" id="UP000002407">
    <property type="component" value="Chromosome"/>
</dbReference>
<dbReference type="GO" id="GO:1990904">
    <property type="term" value="C:ribonucleoprotein complex"/>
    <property type="evidence" value="ECO:0007669"/>
    <property type="project" value="UniProtKB-KW"/>
</dbReference>
<dbReference type="GO" id="GO:0005840">
    <property type="term" value="C:ribosome"/>
    <property type="evidence" value="ECO:0007669"/>
    <property type="project" value="UniProtKB-KW"/>
</dbReference>
<dbReference type="GO" id="GO:0003735">
    <property type="term" value="F:structural constituent of ribosome"/>
    <property type="evidence" value="ECO:0007669"/>
    <property type="project" value="InterPro"/>
</dbReference>
<dbReference type="GO" id="GO:0006412">
    <property type="term" value="P:translation"/>
    <property type="evidence" value="ECO:0007669"/>
    <property type="project" value="UniProtKB-UniRule"/>
</dbReference>
<dbReference type="FunFam" id="1.10.287.3980:FF:000001">
    <property type="entry name" value="Mitochondrial ribosomal protein L34"/>
    <property type="match status" value="1"/>
</dbReference>
<dbReference type="Gene3D" id="1.10.287.3980">
    <property type="match status" value="1"/>
</dbReference>
<dbReference type="HAMAP" id="MF_00391">
    <property type="entry name" value="Ribosomal_bL34"/>
    <property type="match status" value="1"/>
</dbReference>
<dbReference type="InterPro" id="IPR000271">
    <property type="entry name" value="Ribosomal_bL34"/>
</dbReference>
<dbReference type="InterPro" id="IPR020939">
    <property type="entry name" value="Ribosomal_bL34_CS"/>
</dbReference>
<dbReference type="NCBIfam" id="TIGR01030">
    <property type="entry name" value="rpmH_bact"/>
    <property type="match status" value="1"/>
</dbReference>
<dbReference type="PANTHER" id="PTHR14503:SF4">
    <property type="entry name" value="LARGE RIBOSOMAL SUBUNIT PROTEIN BL34M"/>
    <property type="match status" value="1"/>
</dbReference>
<dbReference type="PANTHER" id="PTHR14503">
    <property type="entry name" value="MITOCHONDRIAL RIBOSOMAL PROTEIN 34 FAMILY MEMBER"/>
    <property type="match status" value="1"/>
</dbReference>
<dbReference type="Pfam" id="PF00468">
    <property type="entry name" value="Ribosomal_L34"/>
    <property type="match status" value="1"/>
</dbReference>
<dbReference type="PROSITE" id="PS00784">
    <property type="entry name" value="RIBOSOMAL_L34"/>
    <property type="match status" value="1"/>
</dbReference>